<reference key="1">
    <citation type="journal article" date="1989" name="Plant Mol. Biol.">
        <title>Nucleotide sequences of cDNA clones encoding wheat germ agglutinin isolectins A and D.</title>
        <authorList>
            <person name="Smith J.J."/>
            <person name="Raikhel N.V."/>
        </authorList>
    </citation>
    <scope>NUCLEOTIDE SEQUENCE [MRNA]</scope>
</reference>
<reference key="2">
    <citation type="journal article" date="1984" name="Biochemistry">
        <title>Primary structure of wheat germ agglutinin isolectin 2. Peptide order deduced from X-ray structure.</title>
        <authorList>
            <person name="Wright C.S."/>
            <person name="Gavilanes F."/>
            <person name="Peterson D.L."/>
        </authorList>
    </citation>
    <scope>PROTEIN SEQUENCE OF 28-198</scope>
    <scope>PYROGLUTAMATE FORMATION AT GLN-28</scope>
    <source>
        <tissue>Germ</tissue>
    </source>
</reference>
<reference key="3">
    <citation type="journal article" date="1989" name="J. Mol. Evol.">
        <title>Sequence variability in three wheat germ agglutinin isolectins: products of multiple genes in polyploid wheat.</title>
        <authorList>
            <person name="Wright C.S."/>
            <person name="Raikhel N.V."/>
        </authorList>
    </citation>
    <scope>SEQUENCE REVISION TO 68; 136; 161 AND 177</scope>
</reference>
<reference key="4">
    <citation type="journal article" date="1977" name="J. Mol. Biol.">
        <title>The crystal structure of wheat germ agglutinin at 2.2-A resolution.</title>
        <authorList>
            <person name="Wright C.S."/>
        </authorList>
    </citation>
    <scope>X-RAY CRYSTALLOGRAPHY (2.2 ANGSTROMS)</scope>
</reference>
<reference key="5">
    <citation type="journal article" date="1987" name="J. Mol. Biol.">
        <title>Refinement of the crystal structure of wheat germ agglutinin isolectin 2 at 1.8-A resolution.</title>
        <authorList>
            <person name="Wright C.S."/>
        </authorList>
    </citation>
    <scope>X-RAY CRYSTALLOGRAPHY (1.8 ANGSTROMS)</scope>
</reference>
<reference key="6">
    <citation type="journal article" date="1988" name="J. Mol. Biol.">
        <authorList>
            <person name="Wright C.S."/>
        </authorList>
    </citation>
    <scope>ERRATUM OF PUBMED:3625772</scope>
</reference>
<keyword id="KW-0002">3D-structure</keyword>
<keyword id="KW-0147">Chitin-binding</keyword>
<keyword id="KW-0903">Direct protein sequencing</keyword>
<keyword id="KW-1015">Disulfide bond</keyword>
<keyword id="KW-0430">Lectin</keyword>
<keyword id="KW-0873">Pyrrolidone carboxylic acid</keyword>
<keyword id="KW-1185">Reference proteome</keyword>
<keyword id="KW-0677">Repeat</keyword>
<keyword id="KW-0732">Signal</keyword>
<name>AGI2_WHEAT</name>
<evidence type="ECO:0000250" key="1"/>
<evidence type="ECO:0000255" key="2">
    <source>
        <dbReference type="PROSITE-ProRule" id="PRU00261"/>
    </source>
</evidence>
<evidence type="ECO:0000269" key="3">
    <source>
    </source>
</evidence>
<evidence type="ECO:0000305" key="4"/>
<evidence type="ECO:0007829" key="5">
    <source>
        <dbReference type="PDB" id="2WGC"/>
    </source>
</evidence>
<evidence type="ECO:0007829" key="6">
    <source>
        <dbReference type="PDB" id="9WGA"/>
    </source>
</evidence>
<feature type="signal peptide" evidence="3">
    <location>
        <begin position="1"/>
        <end position="27"/>
    </location>
</feature>
<feature type="chain" id="PRO_0000005257" description="Agglutinin isolectin 2">
    <location>
        <begin position="28"/>
        <end position="198"/>
    </location>
</feature>
<feature type="propeptide" id="PRO_0000005258">
    <location>
        <begin position="199"/>
        <end position="213"/>
    </location>
</feature>
<feature type="domain" description="Chitin-binding type-1 1" evidence="2">
    <location>
        <begin position="28"/>
        <end position="69"/>
    </location>
</feature>
<feature type="domain" description="Chitin-binding type-1 2" evidence="2">
    <location>
        <begin position="70"/>
        <end position="112"/>
    </location>
</feature>
<feature type="domain" description="Chitin-binding type-1 3" evidence="2">
    <location>
        <begin position="113"/>
        <end position="155"/>
    </location>
</feature>
<feature type="domain" description="Chitin-binding type-1 4" evidence="2">
    <location>
        <begin position="156"/>
        <end position="198"/>
    </location>
</feature>
<feature type="binding site" evidence="1">
    <location>
        <begin position="37"/>
        <end position="39"/>
    </location>
    <ligand>
        <name>substrate</name>
    </ligand>
</feature>
<feature type="binding site" evidence="1">
    <location>
        <begin position="89"/>
        <end position="100"/>
    </location>
    <ligand>
        <name>substrate</name>
    </ligand>
</feature>
<feature type="binding site">
    <location>
        <begin position="141"/>
        <end position="142"/>
    </location>
    <ligand>
        <name>substrate</name>
    </ligand>
</feature>
<feature type="modified residue" description="Pyrrolidone carboxylic acid" evidence="3">
    <location>
        <position position="28"/>
    </location>
</feature>
<feature type="disulfide bond" evidence="2 3">
    <location>
        <begin position="30"/>
        <end position="45"/>
    </location>
</feature>
<feature type="disulfide bond" evidence="2 3">
    <location>
        <begin position="39"/>
        <end position="51"/>
    </location>
</feature>
<feature type="disulfide bond" evidence="2 3">
    <location>
        <begin position="44"/>
        <end position="58"/>
    </location>
</feature>
<feature type="disulfide bond" evidence="2 3">
    <location>
        <begin position="62"/>
        <end position="67"/>
    </location>
</feature>
<feature type="disulfide bond" evidence="2 3">
    <location>
        <begin position="73"/>
        <end position="88"/>
    </location>
</feature>
<feature type="disulfide bond" evidence="2 3">
    <location>
        <begin position="82"/>
        <end position="94"/>
    </location>
</feature>
<feature type="disulfide bond" evidence="2 3">
    <location>
        <begin position="87"/>
        <end position="101"/>
    </location>
</feature>
<feature type="disulfide bond" evidence="2 3">
    <location>
        <begin position="105"/>
        <end position="110"/>
    </location>
</feature>
<feature type="disulfide bond" evidence="2 3">
    <location>
        <begin position="116"/>
        <end position="131"/>
    </location>
</feature>
<feature type="disulfide bond" evidence="2 3">
    <location>
        <begin position="125"/>
        <end position="137"/>
    </location>
</feature>
<feature type="disulfide bond" evidence="2 3">
    <location>
        <begin position="130"/>
        <end position="144"/>
    </location>
</feature>
<feature type="disulfide bond" evidence="2 3">
    <location>
        <begin position="148"/>
        <end position="153"/>
    </location>
</feature>
<feature type="disulfide bond" evidence="2 3">
    <location>
        <begin position="159"/>
        <end position="174"/>
    </location>
</feature>
<feature type="disulfide bond" evidence="2 3">
    <location>
        <begin position="168"/>
        <end position="180"/>
    </location>
</feature>
<feature type="disulfide bond" evidence="2 3">
    <location>
        <begin position="173"/>
        <end position="187"/>
    </location>
</feature>
<feature type="disulfide bond" evidence="2 3">
    <location>
        <begin position="191"/>
        <end position="196"/>
    </location>
</feature>
<feature type="sequence conflict" description="In Ref. 2; AA sequence." evidence="4" ref="2">
    <original>N</original>
    <variation>D</variation>
    <location>
        <position position="64"/>
    </location>
</feature>
<feature type="helix" evidence="6">
    <location>
        <begin position="31"/>
        <end position="34"/>
    </location>
</feature>
<feature type="helix" evidence="6">
    <location>
        <begin position="40"/>
        <end position="42"/>
    </location>
</feature>
<feature type="helix" evidence="6">
    <location>
        <begin position="55"/>
        <end position="58"/>
    </location>
</feature>
<feature type="strand" evidence="6">
    <location>
        <begin position="64"/>
        <end position="66"/>
    </location>
</feature>
<feature type="helix" evidence="6">
    <location>
        <begin position="74"/>
        <end position="77"/>
    </location>
</feature>
<feature type="helix" evidence="6">
    <location>
        <begin position="83"/>
        <end position="85"/>
    </location>
</feature>
<feature type="strand" evidence="6">
    <location>
        <begin position="92"/>
        <end position="95"/>
    </location>
</feature>
<feature type="helix" evidence="6">
    <location>
        <begin position="98"/>
        <end position="101"/>
    </location>
</feature>
<feature type="strand" evidence="6">
    <location>
        <begin position="107"/>
        <end position="109"/>
    </location>
</feature>
<feature type="helix" evidence="6">
    <location>
        <begin position="118"/>
        <end position="120"/>
    </location>
</feature>
<feature type="helix" evidence="6">
    <location>
        <begin position="126"/>
        <end position="128"/>
    </location>
</feature>
<feature type="strand" evidence="6">
    <location>
        <begin position="135"/>
        <end position="138"/>
    </location>
</feature>
<feature type="helix" evidence="6">
    <location>
        <begin position="141"/>
        <end position="144"/>
    </location>
</feature>
<feature type="strand" evidence="6">
    <location>
        <begin position="150"/>
        <end position="152"/>
    </location>
</feature>
<feature type="helix" evidence="6">
    <location>
        <begin position="161"/>
        <end position="163"/>
    </location>
</feature>
<feature type="helix" evidence="6">
    <location>
        <begin position="169"/>
        <end position="171"/>
    </location>
</feature>
<feature type="strand" evidence="5">
    <location>
        <begin position="173"/>
        <end position="175"/>
    </location>
</feature>
<feature type="turn" evidence="5">
    <location>
        <begin position="176"/>
        <end position="178"/>
    </location>
</feature>
<feature type="strand" evidence="5">
    <location>
        <begin position="179"/>
        <end position="181"/>
    </location>
</feature>
<feature type="helix" evidence="6">
    <location>
        <begin position="184"/>
        <end position="187"/>
    </location>
</feature>
<feature type="strand" evidence="6">
    <location>
        <begin position="193"/>
        <end position="195"/>
    </location>
</feature>
<accession>P02876</accession>
<sequence>MRKMMSTMALTLGAAVFLAFAAATAQAQRCGEQGSNMECPNNLCCSQYGYCGMGGDYCGKGCQNGACWTSKRCGSQAGGATCPNNHCCSQYGHCGFGAEYCGAGCQGGPCRADIKCGSQSGGKLCPNNLCCSQWGFCGLGSEFCGGGCQSGACSTDKPCGKDAGGRVCTNNYCCSKWGSCGIGPGYCGAGCQSGGCDAVFAGAITANSTLLAE</sequence>
<organism>
    <name type="scientific">Triticum aestivum</name>
    <name type="common">Wheat</name>
    <dbReference type="NCBI Taxonomy" id="4565"/>
    <lineage>
        <taxon>Eukaryota</taxon>
        <taxon>Viridiplantae</taxon>
        <taxon>Streptophyta</taxon>
        <taxon>Embryophyta</taxon>
        <taxon>Tracheophyta</taxon>
        <taxon>Spermatophyta</taxon>
        <taxon>Magnoliopsida</taxon>
        <taxon>Liliopsida</taxon>
        <taxon>Poales</taxon>
        <taxon>Poaceae</taxon>
        <taxon>BOP clade</taxon>
        <taxon>Pooideae</taxon>
        <taxon>Triticodae</taxon>
        <taxon>Triticeae</taxon>
        <taxon>Triticinae</taxon>
        <taxon>Triticum</taxon>
    </lineage>
</organism>
<dbReference type="EMBL" id="M25537">
    <property type="protein sequence ID" value="AAA34258.1"/>
    <property type="molecule type" value="mRNA"/>
</dbReference>
<dbReference type="PIR" id="S09624">
    <property type="entry name" value="AEWT2"/>
</dbReference>
<dbReference type="RefSeq" id="NP_001414927.1">
    <property type="nucleotide sequence ID" value="NM_001427998.1"/>
</dbReference>
<dbReference type="PDB" id="2WGC">
    <property type="method" value="X-ray"/>
    <property type="resolution" value="2.20 A"/>
    <property type="chains" value="A/B=29-198"/>
</dbReference>
<dbReference type="PDB" id="9WGA">
    <property type="method" value="X-ray"/>
    <property type="resolution" value="1.80 A"/>
    <property type="chains" value="A/B=29-198"/>
</dbReference>
<dbReference type="PDBsum" id="2WGC"/>
<dbReference type="PDBsum" id="9WGA"/>
<dbReference type="PCDDB" id="P02876"/>
<dbReference type="SMR" id="P02876"/>
<dbReference type="STRING" id="4565.P02876"/>
<dbReference type="Allergome" id="650">
    <property type="allergen name" value="Tri a 18"/>
</dbReference>
<dbReference type="CAZy" id="CBM18">
    <property type="family name" value="Carbohydrate-Binding Module Family 18"/>
</dbReference>
<dbReference type="UniLectin" id="P02876"/>
<dbReference type="EnsemblPlants" id="TraesJAG1D03G00536970.1">
    <property type="protein sequence ID" value="TraesJAG1D03G00536970.1.CDS1"/>
    <property type="gene ID" value="TraesJAG1D03G00536970"/>
</dbReference>
<dbReference type="EnsemblPlants" id="TraesJUL1D03G00540670.1">
    <property type="protein sequence ID" value="TraesJUL1D03G00540670.1.CDS1"/>
    <property type="gene ID" value="TraesJUL1D03G00540670"/>
</dbReference>
<dbReference type="EnsemblPlants" id="TraesKAR1D01G0303010.1">
    <property type="protein sequence ID" value="cds.TraesKAR1D01G0303010.1"/>
    <property type="gene ID" value="TraesKAR1D01G0303010"/>
</dbReference>
<dbReference type="EnsemblPlants" id="TraesLAC1D03G00541180.1">
    <property type="protein sequence ID" value="TraesLAC1D03G00541180.1.CDS1"/>
    <property type="gene ID" value="TraesLAC1D03G00541180"/>
</dbReference>
<dbReference type="EnsemblPlants" id="TraesLDM1D03G00540050.1">
    <property type="protein sequence ID" value="TraesLDM1D03G00540050.1.CDS1"/>
    <property type="gene ID" value="TraesLDM1D03G00540050"/>
</dbReference>
<dbReference type="EnsemblPlants" id="TraesMAC1D03G00537080.1">
    <property type="protein sequence ID" value="TraesMAC1D03G00537080.1.CDS1"/>
    <property type="gene ID" value="TraesMAC1D03G00537080"/>
</dbReference>
<dbReference type="EnsemblPlants" id="TraesSYM1D03G00544620.1">
    <property type="protein sequence ID" value="TraesSYM1D03G00544620.1.CDS1"/>
    <property type="gene ID" value="TraesSYM1D03G00544620"/>
</dbReference>
<dbReference type="GeneID" id="543494"/>
<dbReference type="Gramene" id="TraesJAG1D03G00536970.1">
    <property type="protein sequence ID" value="TraesJAG1D03G00536970.1.CDS1"/>
    <property type="gene ID" value="TraesJAG1D03G00536970"/>
</dbReference>
<dbReference type="Gramene" id="TraesJUL1D03G00540670.1">
    <property type="protein sequence ID" value="TraesJUL1D03G00540670.1.CDS1"/>
    <property type="gene ID" value="TraesJUL1D03G00540670"/>
</dbReference>
<dbReference type="Gramene" id="TraesKAR1D01G0303010.1">
    <property type="protein sequence ID" value="cds.TraesKAR1D01G0303010.1"/>
    <property type="gene ID" value="TraesKAR1D01G0303010"/>
</dbReference>
<dbReference type="Gramene" id="TraesLAC1D03G00541180.1">
    <property type="protein sequence ID" value="TraesLAC1D03G00541180.1.CDS1"/>
    <property type="gene ID" value="TraesLAC1D03G00541180"/>
</dbReference>
<dbReference type="Gramene" id="TraesLDM1D03G00540050.1">
    <property type="protein sequence ID" value="TraesLDM1D03G00540050.1.CDS1"/>
    <property type="gene ID" value="TraesLDM1D03G00540050"/>
</dbReference>
<dbReference type="Gramene" id="TraesMAC1D03G00537080.1">
    <property type="protein sequence ID" value="TraesMAC1D03G00537080.1.CDS1"/>
    <property type="gene ID" value="TraesMAC1D03G00537080"/>
</dbReference>
<dbReference type="Gramene" id="TraesSYM1D03G00544620.1">
    <property type="protein sequence ID" value="TraesSYM1D03G00544620.1.CDS1"/>
    <property type="gene ID" value="TraesSYM1D03G00544620"/>
</dbReference>
<dbReference type="EvolutionaryTrace" id="P02876"/>
<dbReference type="PRO" id="PR:P02876"/>
<dbReference type="Proteomes" id="UP000019116">
    <property type="component" value="Unplaced"/>
</dbReference>
<dbReference type="ExpressionAtlas" id="P02876">
    <property type="expression patterns" value="baseline"/>
</dbReference>
<dbReference type="GO" id="GO:0030246">
    <property type="term" value="F:carbohydrate binding"/>
    <property type="evidence" value="ECO:0007669"/>
    <property type="project" value="UniProtKB-KW"/>
</dbReference>
<dbReference type="GO" id="GO:0008061">
    <property type="term" value="F:chitin binding"/>
    <property type="evidence" value="ECO:0007669"/>
    <property type="project" value="UniProtKB-KW"/>
</dbReference>
<dbReference type="CDD" id="cd00035">
    <property type="entry name" value="ChtBD1"/>
    <property type="match status" value="4"/>
</dbReference>
<dbReference type="FunFam" id="3.30.60.10:FF:000006">
    <property type="entry name" value="Agglutinin isolectin 1"/>
    <property type="match status" value="1"/>
</dbReference>
<dbReference type="Gene3D" id="3.30.60.10">
    <property type="entry name" value="Endochitinase-like"/>
    <property type="match status" value="4"/>
</dbReference>
<dbReference type="InterPro" id="IPR001002">
    <property type="entry name" value="Chitin-bd_1"/>
</dbReference>
<dbReference type="InterPro" id="IPR018371">
    <property type="entry name" value="Chitin-binding_1_CS"/>
</dbReference>
<dbReference type="InterPro" id="IPR036861">
    <property type="entry name" value="Endochitinase-like_sf"/>
</dbReference>
<dbReference type="PANTHER" id="PTHR47849">
    <property type="entry name" value="CHITIN-BINDING LECTIN 1"/>
    <property type="match status" value="1"/>
</dbReference>
<dbReference type="PANTHER" id="PTHR47849:SF11">
    <property type="entry name" value="CHITIN-BINDING TYPE-1 DOMAIN-CONTAINING PROTEIN"/>
    <property type="match status" value="1"/>
</dbReference>
<dbReference type="Pfam" id="PF00187">
    <property type="entry name" value="Chitin_bind_1"/>
    <property type="match status" value="4"/>
</dbReference>
<dbReference type="PRINTS" id="PR00451">
    <property type="entry name" value="CHITINBINDNG"/>
</dbReference>
<dbReference type="SMART" id="SM00270">
    <property type="entry name" value="ChtBD1"/>
    <property type="match status" value="4"/>
</dbReference>
<dbReference type="SUPFAM" id="SSF57016">
    <property type="entry name" value="Plant lectins/antimicrobial peptides"/>
    <property type="match status" value="4"/>
</dbReference>
<dbReference type="PROSITE" id="PS00026">
    <property type="entry name" value="CHIT_BIND_I_1"/>
    <property type="match status" value="4"/>
</dbReference>
<dbReference type="PROSITE" id="PS50941">
    <property type="entry name" value="CHIT_BIND_I_2"/>
    <property type="match status" value="4"/>
</dbReference>
<proteinExistence type="evidence at protein level"/>
<comment type="function">
    <text>N-acetyl-D-glucosamine / N-acetyl-D-neuraminic acid binding lectin.</text>
</comment>
<comment type="subunit">
    <text>Homodimer, u-shaped.</text>
</comment>
<comment type="miscellaneous">
    <text>The 4 sites proposed for binding to carbohydrates (N-acetyl-D-glucosamine) of receptor molecules are on the surface of the agglutinin molecule.</text>
</comment>
<protein>
    <recommendedName>
        <fullName>Agglutinin isolectin 2</fullName>
    </recommendedName>
    <alternativeName>
        <fullName>Isolectin D</fullName>
    </alternativeName>
    <alternativeName>
        <fullName>WGA2</fullName>
    </alternativeName>
</protein>